<sequence>AVNIPFKVKFRCKAAFC</sequence>
<comment type="function">
    <text evidence="1">Antimicrobial peptide.</text>
</comment>
<comment type="subcellular location">
    <subcellularLocation>
        <location evidence="2 3">Secreted</location>
    </subcellularLocation>
</comment>
<comment type="tissue specificity">
    <text evidence="7">Expressed by the skin glands.</text>
</comment>
<comment type="mass spectrometry"/>
<comment type="mass spectrometry"/>
<comment type="similarity">
    <text evidence="6">Belongs to the frog skin active peptide (FSAP) family. Ranatuerin subfamily.</text>
</comment>
<reference evidence="6" key="1">
    <citation type="journal article" date="2008" name="Rapid Commun. Mass Spectrom.">
        <title>De novo sequencing of peptides secreted by the skin glands of the caucasian green frog Rana ridibunda.</title>
        <authorList>
            <person name="Samgina T.Y."/>
            <person name="Artemenko K.A."/>
            <person name="Gorshkov V.A."/>
            <person name="Ogourtsov S.V."/>
            <person name="Zubarev R.A."/>
            <person name="Lebedev A.T."/>
        </authorList>
    </citation>
    <scope>PROTEIN SEQUENCE</scope>
    <scope>SUBCELLULAR LOCATION</scope>
    <scope>MASS SPECTROMETRY</scope>
    <scope>DISULFIDE BOND</scope>
    <source>
        <tissue evidence="4">Skin secretion</tissue>
    </source>
</reference>
<reference key="2">
    <citation type="journal article" date="2017" name="Anal. Bioanal. Chem.">
        <title>Differentiation of frogs from two populations belonging to the Pelophylax esculentus complex by LC-MS/MS comparison of their skin peptidomes.</title>
        <authorList>
            <person name="Samgina T.Y."/>
            <person name="Artemenko K.A."/>
            <person name="Bergquist J."/>
            <person name="Trebse P."/>
            <person name="Torkar G."/>
            <person name="Tolpina M.D."/>
            <person name="Lebedev A.T."/>
        </authorList>
    </citation>
    <scope>PROTEIN SEQUENCE</scope>
    <scope>SUBCELLULAR LOCATION</scope>
    <scope>DISULFIDE BOND</scope>
    <scope>MASS SPECTROMETRY</scope>
    <scope>IDENTIFICATION BY MASS SPECTROMETRY</scope>
    <source>
        <tissue evidence="5">Skin secretion</tissue>
    </source>
</reference>
<evidence type="ECO:0000250" key="1"/>
<evidence type="ECO:0000269" key="2">
    <source>
    </source>
</evidence>
<evidence type="ECO:0000269" key="3">
    <source>
    </source>
</evidence>
<evidence type="ECO:0000303" key="4">
    <source>
    </source>
</evidence>
<evidence type="ECO:0000303" key="5">
    <source>
    </source>
</evidence>
<evidence type="ECO:0000305" key="6"/>
<evidence type="ECO:0000305" key="7">
    <source>
    </source>
</evidence>
<dbReference type="GO" id="GO:0005576">
    <property type="term" value="C:extracellular region"/>
    <property type="evidence" value="ECO:0007669"/>
    <property type="project" value="UniProtKB-SubCell"/>
</dbReference>
<dbReference type="GO" id="GO:0042742">
    <property type="term" value="P:defense response to bacterium"/>
    <property type="evidence" value="ECO:0007669"/>
    <property type="project" value="UniProtKB-KW"/>
</dbReference>
<name>RN2_PELRI</name>
<organism>
    <name type="scientific">Pelophylax ridibundus</name>
    <name type="common">Marsh frog</name>
    <name type="synonym">Rana ridibunda</name>
    <dbReference type="NCBI Taxonomy" id="8406"/>
    <lineage>
        <taxon>Eukaryota</taxon>
        <taxon>Metazoa</taxon>
        <taxon>Chordata</taxon>
        <taxon>Craniata</taxon>
        <taxon>Vertebrata</taxon>
        <taxon>Euteleostomi</taxon>
        <taxon>Amphibia</taxon>
        <taxon>Batrachia</taxon>
        <taxon>Anura</taxon>
        <taxon>Neobatrachia</taxon>
        <taxon>Ranoidea</taxon>
        <taxon>Ranidae</taxon>
        <taxon>Pelophylax</taxon>
    </lineage>
</organism>
<feature type="peptide" id="PRO_0000361068" description="Ranatuerin-2R" evidence="2 3">
    <location>
        <begin position="1"/>
        <end position="17"/>
    </location>
</feature>
<feature type="disulfide bond" evidence="2 3">
    <location>
        <begin position="12"/>
        <end position="17"/>
    </location>
</feature>
<proteinExistence type="evidence at protein level"/>
<protein>
    <recommendedName>
        <fullName evidence="4">Ranatuerin-2R</fullName>
    </recommendedName>
</protein>
<accession>P86019</accession>
<keyword id="KW-0878">Amphibian defense peptide</keyword>
<keyword id="KW-0044">Antibiotic</keyword>
<keyword id="KW-0929">Antimicrobial</keyword>
<keyword id="KW-0903">Direct protein sequencing</keyword>
<keyword id="KW-1015">Disulfide bond</keyword>
<keyword id="KW-0964">Secreted</keyword>